<evidence type="ECO:0000250" key="1"/>
<evidence type="ECO:0000250" key="2">
    <source>
        <dbReference type="UniProtKB" id="Q9NWX5"/>
    </source>
</evidence>
<evidence type="ECO:0000255" key="3">
    <source>
        <dbReference type="PROSITE-ProRule" id="PRU00194"/>
    </source>
</evidence>
<evidence type="ECO:0000269" key="4">
    <source>
    </source>
</evidence>
<evidence type="ECO:0000305" key="5"/>
<keyword id="KW-0040">ANK repeat</keyword>
<keyword id="KW-0963">Cytoplasm</keyword>
<keyword id="KW-1185">Reference proteome</keyword>
<keyword id="KW-0677">Repeat</keyword>
<keyword id="KW-0833">Ubl conjugation pathway</keyword>
<organism>
    <name type="scientific">Mus musculus</name>
    <name type="common">Mouse</name>
    <dbReference type="NCBI Taxonomy" id="10090"/>
    <lineage>
        <taxon>Eukaryota</taxon>
        <taxon>Metazoa</taxon>
        <taxon>Chordata</taxon>
        <taxon>Craniata</taxon>
        <taxon>Vertebrata</taxon>
        <taxon>Euteleostomi</taxon>
        <taxon>Mammalia</taxon>
        <taxon>Eutheria</taxon>
        <taxon>Euarchontoglires</taxon>
        <taxon>Glires</taxon>
        <taxon>Rodentia</taxon>
        <taxon>Myomorpha</taxon>
        <taxon>Muroidea</taxon>
        <taxon>Muridae</taxon>
        <taxon>Murinae</taxon>
        <taxon>Mus</taxon>
        <taxon>Mus</taxon>
    </lineage>
</organism>
<gene>
    <name type="primary">Asb6</name>
</gene>
<protein>
    <recommendedName>
        <fullName>Ankyrin repeat and SOCS box protein 6</fullName>
        <shortName>ASB-6</shortName>
    </recommendedName>
</protein>
<name>ASB6_MOUSE</name>
<dbReference type="EMBL" id="AF398967">
    <property type="protein sequence ID" value="AAK97489.1"/>
    <property type="molecule type" value="mRNA"/>
</dbReference>
<dbReference type="EMBL" id="BC019192">
    <property type="protein sequence ID" value="AAH19192.1"/>
    <property type="molecule type" value="mRNA"/>
</dbReference>
<dbReference type="CCDS" id="CCDS38096.1"/>
<dbReference type="RefSeq" id="NP_579924.1">
    <property type="nucleotide sequence ID" value="NM_133346.2"/>
</dbReference>
<dbReference type="SMR" id="Q91ZU1"/>
<dbReference type="BioGRID" id="215308">
    <property type="interactions" value="5"/>
</dbReference>
<dbReference type="FunCoup" id="Q91ZU1">
    <property type="interactions" value="2676"/>
</dbReference>
<dbReference type="IntAct" id="Q91ZU1">
    <property type="interactions" value="2"/>
</dbReference>
<dbReference type="STRING" id="10090.ENSMUSP00000043462"/>
<dbReference type="iPTMnet" id="Q91ZU1"/>
<dbReference type="PhosphoSitePlus" id="Q91ZU1"/>
<dbReference type="PaxDb" id="10090-ENSMUSP00000043462"/>
<dbReference type="ProteomicsDB" id="277251"/>
<dbReference type="Pumba" id="Q91ZU1"/>
<dbReference type="Antibodypedia" id="1154">
    <property type="antibodies" value="79 antibodies from 20 providers"/>
</dbReference>
<dbReference type="DNASU" id="72323"/>
<dbReference type="Ensembl" id="ENSMUST00000041726.4">
    <property type="protein sequence ID" value="ENSMUSP00000043462.4"/>
    <property type="gene ID" value="ENSMUSG00000039483.11"/>
</dbReference>
<dbReference type="GeneID" id="72323"/>
<dbReference type="KEGG" id="mmu:72323"/>
<dbReference type="UCSC" id="uc008jcx.1">
    <property type="organism name" value="mouse"/>
</dbReference>
<dbReference type="AGR" id="MGI:1919573"/>
<dbReference type="CTD" id="140459"/>
<dbReference type="MGI" id="MGI:1919573">
    <property type="gene designation" value="Asb6"/>
</dbReference>
<dbReference type="VEuPathDB" id="HostDB:ENSMUSG00000039483"/>
<dbReference type="eggNOG" id="KOG0504">
    <property type="taxonomic scope" value="Eukaryota"/>
</dbReference>
<dbReference type="GeneTree" id="ENSGT00390000006784"/>
<dbReference type="HOGENOM" id="CLU_000134_52_2_1"/>
<dbReference type="InParanoid" id="Q91ZU1"/>
<dbReference type="OMA" id="HLCRVHI"/>
<dbReference type="OrthoDB" id="194358at2759"/>
<dbReference type="PhylomeDB" id="Q91ZU1"/>
<dbReference type="TreeFam" id="TF330837"/>
<dbReference type="Reactome" id="R-MMU-8951664">
    <property type="pathway name" value="Neddylation"/>
</dbReference>
<dbReference type="Reactome" id="R-MMU-983168">
    <property type="pathway name" value="Antigen processing: Ubiquitination &amp; Proteasome degradation"/>
</dbReference>
<dbReference type="UniPathway" id="UPA00143"/>
<dbReference type="BioGRID-ORCS" id="72323">
    <property type="hits" value="5 hits in 77 CRISPR screens"/>
</dbReference>
<dbReference type="PRO" id="PR:Q91ZU1"/>
<dbReference type="Proteomes" id="UP000000589">
    <property type="component" value="Chromosome 2"/>
</dbReference>
<dbReference type="RNAct" id="Q91ZU1">
    <property type="molecule type" value="protein"/>
</dbReference>
<dbReference type="Bgee" id="ENSMUSG00000039483">
    <property type="expression patterns" value="Expressed in embryonic brain and 226 other cell types or tissues"/>
</dbReference>
<dbReference type="ExpressionAtlas" id="Q91ZU1">
    <property type="expression patterns" value="baseline and differential"/>
</dbReference>
<dbReference type="GO" id="GO:0005737">
    <property type="term" value="C:cytoplasm"/>
    <property type="evidence" value="ECO:0007669"/>
    <property type="project" value="UniProtKB-SubCell"/>
</dbReference>
<dbReference type="GO" id="GO:0035556">
    <property type="term" value="P:intracellular signal transduction"/>
    <property type="evidence" value="ECO:0007669"/>
    <property type="project" value="InterPro"/>
</dbReference>
<dbReference type="GO" id="GO:0016567">
    <property type="term" value="P:protein ubiquitination"/>
    <property type="evidence" value="ECO:0007669"/>
    <property type="project" value="UniProtKB-UniPathway"/>
</dbReference>
<dbReference type="CDD" id="cd03725">
    <property type="entry name" value="SOCS_ASB6"/>
    <property type="match status" value="1"/>
</dbReference>
<dbReference type="FunFam" id="1.10.750.20:FF:000001">
    <property type="entry name" value="Ankyrin repeat and SOCS box containing 1"/>
    <property type="match status" value="1"/>
</dbReference>
<dbReference type="Gene3D" id="1.25.40.20">
    <property type="entry name" value="Ankyrin repeat-containing domain"/>
    <property type="match status" value="1"/>
</dbReference>
<dbReference type="Gene3D" id="1.10.750.20">
    <property type="entry name" value="SOCS box"/>
    <property type="match status" value="1"/>
</dbReference>
<dbReference type="InterPro" id="IPR002110">
    <property type="entry name" value="Ankyrin_rpt"/>
</dbReference>
<dbReference type="InterPro" id="IPR036770">
    <property type="entry name" value="Ankyrin_rpt-contain_sf"/>
</dbReference>
<dbReference type="InterPro" id="IPR037327">
    <property type="entry name" value="ASB6_SOCS"/>
</dbReference>
<dbReference type="InterPro" id="IPR001496">
    <property type="entry name" value="SOCS_box"/>
</dbReference>
<dbReference type="InterPro" id="IPR036036">
    <property type="entry name" value="SOCS_box-like_dom_sf"/>
</dbReference>
<dbReference type="PANTHER" id="PTHR24132">
    <property type="entry name" value="ANKYRIN REPEAT AND SOCS BOX PROTEIN 6"/>
    <property type="match status" value="1"/>
</dbReference>
<dbReference type="PANTHER" id="PTHR24132:SF24">
    <property type="entry name" value="ANKYRIN REPEAT AND SOCS BOX PROTEIN 6"/>
    <property type="match status" value="1"/>
</dbReference>
<dbReference type="Pfam" id="PF12796">
    <property type="entry name" value="Ank_2"/>
    <property type="match status" value="1"/>
</dbReference>
<dbReference type="Pfam" id="PF13637">
    <property type="entry name" value="Ank_4"/>
    <property type="match status" value="1"/>
</dbReference>
<dbReference type="Pfam" id="PF07525">
    <property type="entry name" value="SOCS_box"/>
    <property type="match status" value="1"/>
</dbReference>
<dbReference type="SMART" id="SM00248">
    <property type="entry name" value="ANK"/>
    <property type="match status" value="4"/>
</dbReference>
<dbReference type="SMART" id="SM00253">
    <property type="entry name" value="SOCS"/>
    <property type="match status" value="1"/>
</dbReference>
<dbReference type="SMART" id="SM00969">
    <property type="entry name" value="SOCS_box"/>
    <property type="match status" value="1"/>
</dbReference>
<dbReference type="SUPFAM" id="SSF48403">
    <property type="entry name" value="Ankyrin repeat"/>
    <property type="match status" value="1"/>
</dbReference>
<dbReference type="SUPFAM" id="SSF158235">
    <property type="entry name" value="SOCS box-like"/>
    <property type="match status" value="1"/>
</dbReference>
<dbReference type="PROSITE" id="PS50297">
    <property type="entry name" value="ANK_REP_REGION"/>
    <property type="match status" value="1"/>
</dbReference>
<dbReference type="PROSITE" id="PS50088">
    <property type="entry name" value="ANK_REPEAT"/>
    <property type="match status" value="2"/>
</dbReference>
<dbReference type="PROSITE" id="PS50225">
    <property type="entry name" value="SOCS"/>
    <property type="match status" value="1"/>
</dbReference>
<accession>Q91ZU1</accession>
<accession>Q8VEC6</accession>
<comment type="function">
    <text evidence="2 4">Probable substrate-recognition component of a SCF-like ECS (Elongin-Cullin-SOCS-box protein) E3 ubiquitin-protein ligase complex which mediates the ubiquitination and subsequent proteasomal degradation of target proteins. May play a role in the regulation of cell proliferation and autophagy by promoting the ubiquitination and degradation of SQSTM1.</text>
</comment>
<comment type="pathway">
    <text>Protein modification; protein ubiquitination.</text>
</comment>
<comment type="subunit">
    <text evidence="1 2 4">Binds APS (PubMed:15231829). Identified in a complex with ELOB and ELOC (By similarity). Interacts with CUL5 and RNF7. Interacts with SQSTM1 (By similarity).</text>
</comment>
<comment type="subcellular location">
    <subcellularLocation>
        <location evidence="4">Cytoplasm</location>
    </subcellularLocation>
</comment>
<comment type="tissue specificity">
    <text evidence="4">Detected in adipocytes.</text>
</comment>
<comment type="domain">
    <text evidence="1">The SOCS box domain mediates the interaction with the Elongin BC complex, an adapter module in different E3 ubiquitin-protein ligase complexes.</text>
</comment>
<comment type="similarity">
    <text evidence="5">Belongs to the ankyrin SOCS box (ASB) family.</text>
</comment>
<feature type="chain" id="PRO_0000066934" description="Ankyrin repeat and SOCS box protein 6">
    <location>
        <begin position="1"/>
        <end position="418"/>
    </location>
</feature>
<feature type="repeat" description="ANK 1">
    <location>
        <begin position="65"/>
        <end position="95"/>
    </location>
</feature>
<feature type="repeat" description="ANK 2">
    <location>
        <begin position="100"/>
        <end position="129"/>
    </location>
</feature>
<feature type="repeat" description="ANK 3">
    <location>
        <begin position="134"/>
        <end position="164"/>
    </location>
</feature>
<feature type="repeat" description="ANK 4">
    <location>
        <begin position="168"/>
        <end position="203"/>
    </location>
</feature>
<feature type="repeat" description="ANK 5">
    <location>
        <begin position="224"/>
        <end position="253"/>
    </location>
</feature>
<feature type="repeat" description="ANK 6">
    <location>
        <begin position="258"/>
        <end position="287"/>
    </location>
</feature>
<feature type="domain" description="SOCS box" evidence="3">
    <location>
        <begin position="358"/>
        <end position="413"/>
    </location>
</feature>
<feature type="sequence conflict" description="In Ref. 2; AAH19192." evidence="5" ref="2">
    <original>E</original>
    <variation>D</variation>
    <location>
        <position position="189"/>
    </location>
</feature>
<reference key="1">
    <citation type="journal article" date="2001" name="Mol. Cell. Biol.">
        <title>Functional analysis of Asb-1 using genetic modification in mice.</title>
        <authorList>
            <person name="Kile B.T."/>
            <person name="Metcalf D."/>
            <person name="Mifsud S."/>
            <person name="DiRago L."/>
            <person name="Nicola N.A."/>
            <person name="Hilton D.J."/>
            <person name="Alexander W.S."/>
        </authorList>
    </citation>
    <scope>NUCLEOTIDE SEQUENCE [MRNA]</scope>
</reference>
<reference key="2">
    <citation type="journal article" date="2004" name="Genome Res.">
        <title>The status, quality, and expansion of the NIH full-length cDNA project: the Mammalian Gene Collection (MGC).</title>
        <authorList>
            <consortium name="The MGC Project Team"/>
        </authorList>
    </citation>
    <scope>NUCLEOTIDE SEQUENCE [LARGE SCALE MRNA]</scope>
</reference>
<reference key="3">
    <citation type="journal article" date="2004" name="J. Biol. Chem.">
        <title>Asb6, an adipocyte-specific ankyrin and SOCS box protein, interacts with APS to enable recruitment of elongins B and C to the insulin receptor signaling complex.</title>
        <authorList>
            <person name="Wilcox A."/>
            <person name="Katsanakis K.D."/>
            <person name="Bheda F."/>
            <person name="Pillay T.S."/>
        </authorList>
    </citation>
    <scope>FUNCTION</scope>
    <scope>SUBCELLULAR LOCATION</scope>
    <scope>INTERACTION WITH APS</scope>
    <scope>IDENTIFICATION IN A COMPLEX CONTAINING ELOB AND ELOC</scope>
    <scope>TISSUE SPECIFICITY</scope>
</reference>
<reference key="4">
    <citation type="journal article" date="2010" name="Cell">
        <title>A tissue-specific atlas of mouse protein phosphorylation and expression.</title>
        <authorList>
            <person name="Huttlin E.L."/>
            <person name="Jedrychowski M.P."/>
            <person name="Elias J.E."/>
            <person name="Goswami T."/>
            <person name="Rad R."/>
            <person name="Beausoleil S.A."/>
            <person name="Villen J."/>
            <person name="Haas W."/>
            <person name="Sowa M.E."/>
            <person name="Gygi S.P."/>
        </authorList>
    </citation>
    <scope>IDENTIFICATION BY MASS SPECTROMETRY [LARGE SCALE ANALYSIS]</scope>
    <source>
        <tissue>Spleen</tissue>
    </source>
</reference>
<proteinExistence type="evidence at protein level"/>
<sequence>MPFLHGFRRIIFEYQPLVDAILGALGIQDLERQEPLDDSASSEESRILVLTELLEQKAHSPFYQEGVSNALLKMAELGLTRAAAVLLQSGANLNFEDPVTYYTALHIAVLRNQPDMVELLVRHGADINRRDRIHESSPLDLASEEPERLPCLQRLLDLGADVNAADKNGKTALLHALASSDGVQIHNTENIRLLLEGGADVKATTKDGDTVFTCIIFLLGETVCGDKEEAPMINRFCFQVTQLLLAHGADPSECPAHESLTHICLKSFKLHFPLLCFLLESGAAYNCSLHGASCWSGFNLVFERLCSHPGCAEDDSHIELLHKAETVLDLMVTSSQRLQLPENLNIHPVGSLAGKIQALHASLRQLESYPPPLKHLCRVSIRLCLRPWPVDTKVKALPLPDRLKWYLLSAHSDTQDTC</sequence>